<organism>
    <name type="scientific">Escherichia coli O6:H1 (strain CFT073 / ATCC 700928 / UPEC)</name>
    <dbReference type="NCBI Taxonomy" id="199310"/>
    <lineage>
        <taxon>Bacteria</taxon>
        <taxon>Pseudomonadati</taxon>
        <taxon>Pseudomonadota</taxon>
        <taxon>Gammaproteobacteria</taxon>
        <taxon>Enterobacterales</taxon>
        <taxon>Enterobacteriaceae</taxon>
        <taxon>Escherichia</taxon>
    </lineage>
</organism>
<feature type="chain" id="PRO_0000168813" description="Large ribosomal RNA subunit accumulation protein YceD">
    <location>
        <begin position="1"/>
        <end position="173"/>
    </location>
</feature>
<name>YCED_ECOL6</name>
<accession>P0AB29</accession>
<accession>P14189</accession>
<protein>
    <recommendedName>
        <fullName>Large ribosomal RNA subunit accumulation protein YceD</fullName>
    </recommendedName>
    <alternativeName>
        <fullName>23S rRNA accumulation protein YceD</fullName>
    </alternativeName>
</protein>
<comment type="function">
    <text evidence="1">Plays a role in synthesis, processing and/or stability of 23S rRNA.</text>
</comment>
<comment type="similarity">
    <text evidence="2">Belongs to the DUF177 domain family.</text>
</comment>
<reference key="1">
    <citation type="journal article" date="2002" name="Proc. Natl. Acad. Sci. U.S.A.">
        <title>Extensive mosaic structure revealed by the complete genome sequence of uropathogenic Escherichia coli.</title>
        <authorList>
            <person name="Welch R.A."/>
            <person name="Burland V."/>
            <person name="Plunkett G. III"/>
            <person name="Redford P."/>
            <person name="Roesch P."/>
            <person name="Rasko D."/>
            <person name="Buckles E.L."/>
            <person name="Liou S.-R."/>
            <person name="Boutin A."/>
            <person name="Hackett J."/>
            <person name="Stroud D."/>
            <person name="Mayhew G.F."/>
            <person name="Rose D.J."/>
            <person name="Zhou S."/>
            <person name="Schwartz D.C."/>
            <person name="Perna N.T."/>
            <person name="Mobley H.L.T."/>
            <person name="Donnenberg M.S."/>
            <person name="Blattner F.R."/>
        </authorList>
    </citation>
    <scope>NUCLEOTIDE SEQUENCE [LARGE SCALE GENOMIC DNA]</scope>
    <source>
        <strain>CFT073 / ATCC 700928 / UPEC</strain>
    </source>
</reference>
<dbReference type="EMBL" id="AE014075">
    <property type="protein sequence ID" value="AAN79829.1"/>
    <property type="molecule type" value="Genomic_DNA"/>
</dbReference>
<dbReference type="RefSeq" id="WP_001174481.1">
    <property type="nucleotide sequence ID" value="NZ_CP051263.1"/>
</dbReference>
<dbReference type="STRING" id="199310.c1358"/>
<dbReference type="GeneID" id="86863582"/>
<dbReference type="KEGG" id="ecc:c1358"/>
<dbReference type="eggNOG" id="COG1399">
    <property type="taxonomic scope" value="Bacteria"/>
</dbReference>
<dbReference type="HOGENOM" id="CLU_094127_2_1_6"/>
<dbReference type="BioCyc" id="ECOL199310:C1358-MONOMER"/>
<dbReference type="Proteomes" id="UP000001410">
    <property type="component" value="Chromosome"/>
</dbReference>
<dbReference type="GO" id="GO:0005829">
    <property type="term" value="C:cytosol"/>
    <property type="evidence" value="ECO:0007669"/>
    <property type="project" value="TreeGrafter"/>
</dbReference>
<dbReference type="GO" id="GO:0042254">
    <property type="term" value="P:ribosome biogenesis"/>
    <property type="evidence" value="ECO:0007669"/>
    <property type="project" value="UniProtKB-KW"/>
</dbReference>
<dbReference type="InterPro" id="IPR003772">
    <property type="entry name" value="YceD"/>
</dbReference>
<dbReference type="InterPro" id="IPR039255">
    <property type="entry name" value="YceD_bac"/>
</dbReference>
<dbReference type="NCBIfam" id="NF008395">
    <property type="entry name" value="PRK11193.1"/>
    <property type="match status" value="1"/>
</dbReference>
<dbReference type="PANTHER" id="PTHR38099">
    <property type="entry name" value="LARGE RIBOSOMAL RNA SUBUNIT ACCUMULATION PROTEIN YCED"/>
    <property type="match status" value="1"/>
</dbReference>
<dbReference type="PANTHER" id="PTHR38099:SF1">
    <property type="entry name" value="LARGE RIBOSOMAL RNA SUBUNIT ACCUMULATION PROTEIN YCED"/>
    <property type="match status" value="1"/>
</dbReference>
<dbReference type="Pfam" id="PF02620">
    <property type="entry name" value="YceD"/>
    <property type="match status" value="1"/>
</dbReference>
<proteinExistence type="inferred from homology"/>
<keyword id="KW-1185">Reference proteome</keyword>
<keyword id="KW-0690">Ribosome biogenesis</keyword>
<evidence type="ECO:0000250" key="1">
    <source>
        <dbReference type="UniProtKB" id="P0AB28"/>
    </source>
</evidence>
<evidence type="ECO:0000305" key="2"/>
<gene>
    <name type="primary">yceD</name>
    <name type="ordered locus">c1358</name>
</gene>
<sequence>MQKVKLPLTLDPVRTAQKRLDYQGIYTPDQVERVAESVVSVDSDVECSMSFAIDNQRLAVLNGDAKVTVTLECQRCGKPFTHQVYTTYCFSPVRSDEQAEALPEAYEPIEVNEFGEIDLLAMVEDEIILALPVVPVHDSEHCEVSEADMVFGELPEEAQKPNPFAVLASLKRK</sequence>